<feature type="chain" id="PRO_0000128755" description="Probable malate:quinone oxidoreductase 3">
    <location>
        <begin position="1"/>
        <end position="494"/>
    </location>
</feature>
<comment type="catalytic activity">
    <reaction evidence="1">
        <text>(S)-malate + a quinone = a quinol + oxaloacetate</text>
        <dbReference type="Rhea" id="RHEA:46012"/>
        <dbReference type="ChEBI" id="CHEBI:15589"/>
        <dbReference type="ChEBI" id="CHEBI:16452"/>
        <dbReference type="ChEBI" id="CHEBI:24646"/>
        <dbReference type="ChEBI" id="CHEBI:132124"/>
        <dbReference type="EC" id="1.1.5.4"/>
    </reaction>
</comment>
<comment type="cofactor">
    <cofactor evidence="1">
        <name>FAD</name>
        <dbReference type="ChEBI" id="CHEBI:57692"/>
    </cofactor>
</comment>
<comment type="pathway">
    <text evidence="1">Carbohydrate metabolism; tricarboxylic acid cycle; oxaloacetate from (S)-malate (quinone route): step 1/1.</text>
</comment>
<comment type="similarity">
    <text evidence="1">Belongs to the MQO family.</text>
</comment>
<gene>
    <name evidence="1" type="primary">mqo3</name>
    <name type="ordered locus">SERP2412</name>
</gene>
<accession>Q5HKD6</accession>
<protein>
    <recommendedName>
        <fullName evidence="1">Probable malate:quinone oxidoreductase 3</fullName>
        <ecNumber evidence="1">1.1.5.4</ecNumber>
    </recommendedName>
    <alternativeName>
        <fullName evidence="1">MQO 3</fullName>
    </alternativeName>
    <alternativeName>
        <fullName evidence="1">Malate dehydrogenase [quinone] 3</fullName>
    </alternativeName>
</protein>
<sequence length="494" mass="55636">MSEANHKNIVVVGAGIIGTSVATMLSKVSPNWHIDMFERLEGAGIESSNENNNAGTGHAALCELNYTVEQDDGSIDASKAQEINEQFELSRQFWGNLVKNGDISNPEEFIQPLPHISFVMGPTNVNFLRKRYETLRTLPMFDTIEYTEDMETMRKWMPLMMENREPGHQMAASKIDEGTDVNYGALTRKLAHYLEQKSNVSLKYNHDVVDLTQREDGKWEVVVENRETKEKVTKIADKVFIGAGGHSIPLLQKSGVKQREHLGGFPISGQFLRCTNPDIIKQHAAKVYSKEPQGKPPMTVPHLDTRYINGKQTLLFGPYANIGPKFLKFGSNLDLFESIKPYNITTMLASAVKNVPLIKYSIDQMIKTKEGCMNYLRTFIPDAKDEDWELYTAGKRVQVIKDSEQHGKGFVVFGTEVVNSDDNSMIALLGESPGASTSLSVVLEVLEKNFADDKEAWEPVVKEMVPTYGRSLINDEKLMRETRRETSKNLHLNR</sequence>
<keyword id="KW-0274">FAD</keyword>
<keyword id="KW-0285">Flavoprotein</keyword>
<keyword id="KW-0560">Oxidoreductase</keyword>
<keyword id="KW-1185">Reference proteome</keyword>
<keyword id="KW-0816">Tricarboxylic acid cycle</keyword>
<proteinExistence type="inferred from homology"/>
<name>MQO3_STAEQ</name>
<reference key="1">
    <citation type="journal article" date="2005" name="J. Bacteriol.">
        <title>Insights on evolution of virulence and resistance from the complete genome analysis of an early methicillin-resistant Staphylococcus aureus strain and a biofilm-producing methicillin-resistant Staphylococcus epidermidis strain.</title>
        <authorList>
            <person name="Gill S.R."/>
            <person name="Fouts D.E."/>
            <person name="Archer G.L."/>
            <person name="Mongodin E.F."/>
            <person name="DeBoy R.T."/>
            <person name="Ravel J."/>
            <person name="Paulsen I.T."/>
            <person name="Kolonay J.F."/>
            <person name="Brinkac L.M."/>
            <person name="Beanan M.J."/>
            <person name="Dodson R.J."/>
            <person name="Daugherty S.C."/>
            <person name="Madupu R."/>
            <person name="Angiuoli S.V."/>
            <person name="Durkin A.S."/>
            <person name="Haft D.H."/>
            <person name="Vamathevan J.J."/>
            <person name="Khouri H."/>
            <person name="Utterback T.R."/>
            <person name="Lee C."/>
            <person name="Dimitrov G."/>
            <person name="Jiang L."/>
            <person name="Qin H."/>
            <person name="Weidman J."/>
            <person name="Tran K."/>
            <person name="Kang K.H."/>
            <person name="Hance I.R."/>
            <person name="Nelson K.E."/>
            <person name="Fraser C.M."/>
        </authorList>
    </citation>
    <scope>NUCLEOTIDE SEQUENCE [LARGE SCALE GENOMIC DNA]</scope>
    <source>
        <strain>ATCC 35984 / DSM 28319 / BCRC 17069 / CCUG 31568 / BM 3577 / RP62A</strain>
    </source>
</reference>
<organism>
    <name type="scientific">Staphylococcus epidermidis (strain ATCC 35984 / DSM 28319 / BCRC 17069 / CCUG 31568 / BM 3577 / RP62A)</name>
    <dbReference type="NCBI Taxonomy" id="176279"/>
    <lineage>
        <taxon>Bacteria</taxon>
        <taxon>Bacillati</taxon>
        <taxon>Bacillota</taxon>
        <taxon>Bacilli</taxon>
        <taxon>Bacillales</taxon>
        <taxon>Staphylococcaceae</taxon>
        <taxon>Staphylococcus</taxon>
    </lineage>
</organism>
<dbReference type="EC" id="1.1.5.4" evidence="1"/>
<dbReference type="EMBL" id="CP000029">
    <property type="protein sequence ID" value="AAW53266.1"/>
    <property type="molecule type" value="Genomic_DNA"/>
</dbReference>
<dbReference type="SMR" id="Q5HKD6"/>
<dbReference type="STRING" id="176279.SERP2412"/>
<dbReference type="KEGG" id="ser:SERP2412"/>
<dbReference type="eggNOG" id="COG0579">
    <property type="taxonomic scope" value="Bacteria"/>
</dbReference>
<dbReference type="HOGENOM" id="CLU_028151_0_0_9"/>
<dbReference type="UniPathway" id="UPA00223">
    <property type="reaction ID" value="UER01008"/>
</dbReference>
<dbReference type="Proteomes" id="UP000000531">
    <property type="component" value="Chromosome"/>
</dbReference>
<dbReference type="GO" id="GO:0047545">
    <property type="term" value="F:2-hydroxyglutarate dehydrogenase activity"/>
    <property type="evidence" value="ECO:0007669"/>
    <property type="project" value="TreeGrafter"/>
</dbReference>
<dbReference type="GO" id="GO:0008924">
    <property type="term" value="F:L-malate dehydrogenase (quinone) activity"/>
    <property type="evidence" value="ECO:0007669"/>
    <property type="project" value="UniProtKB-UniRule"/>
</dbReference>
<dbReference type="GO" id="GO:0006099">
    <property type="term" value="P:tricarboxylic acid cycle"/>
    <property type="evidence" value="ECO:0007669"/>
    <property type="project" value="UniProtKB-UniRule"/>
</dbReference>
<dbReference type="Gene3D" id="3.50.50.60">
    <property type="entry name" value="FAD/NAD(P)-binding domain"/>
    <property type="match status" value="2"/>
</dbReference>
<dbReference type="HAMAP" id="MF_00212">
    <property type="entry name" value="MQO"/>
    <property type="match status" value="1"/>
</dbReference>
<dbReference type="InterPro" id="IPR036188">
    <property type="entry name" value="FAD/NAD-bd_sf"/>
</dbReference>
<dbReference type="InterPro" id="IPR006231">
    <property type="entry name" value="MQO"/>
</dbReference>
<dbReference type="NCBIfam" id="NF040844">
    <property type="entry name" value="Lac_Quin_Ox_NO"/>
    <property type="match status" value="1"/>
</dbReference>
<dbReference type="NCBIfam" id="TIGR01320">
    <property type="entry name" value="mal_quin_oxido"/>
    <property type="match status" value="1"/>
</dbReference>
<dbReference type="NCBIfam" id="NF003606">
    <property type="entry name" value="PRK05257.2-1"/>
    <property type="match status" value="1"/>
</dbReference>
<dbReference type="NCBIfam" id="NF003611">
    <property type="entry name" value="PRK05257.3-2"/>
    <property type="match status" value="1"/>
</dbReference>
<dbReference type="NCBIfam" id="NF009875">
    <property type="entry name" value="PRK13339.1"/>
    <property type="match status" value="1"/>
</dbReference>
<dbReference type="PANTHER" id="PTHR43104">
    <property type="entry name" value="L-2-HYDROXYGLUTARATE DEHYDROGENASE, MITOCHONDRIAL"/>
    <property type="match status" value="1"/>
</dbReference>
<dbReference type="PANTHER" id="PTHR43104:SF2">
    <property type="entry name" value="L-2-HYDROXYGLUTARATE DEHYDROGENASE, MITOCHONDRIAL"/>
    <property type="match status" value="1"/>
</dbReference>
<dbReference type="Pfam" id="PF06039">
    <property type="entry name" value="Mqo"/>
    <property type="match status" value="1"/>
</dbReference>
<dbReference type="SUPFAM" id="SSF51905">
    <property type="entry name" value="FAD/NAD(P)-binding domain"/>
    <property type="match status" value="1"/>
</dbReference>
<evidence type="ECO:0000255" key="1">
    <source>
        <dbReference type="HAMAP-Rule" id="MF_00212"/>
    </source>
</evidence>